<dbReference type="EC" id="3.5.1.5" evidence="1"/>
<dbReference type="EMBL" id="AM420293">
    <property type="protein sequence ID" value="CAL99979.1"/>
    <property type="molecule type" value="Genomic_DNA"/>
</dbReference>
<dbReference type="RefSeq" id="WP_009950043.1">
    <property type="nucleotide sequence ID" value="NC_009142.1"/>
</dbReference>
<dbReference type="SMR" id="A4F7F5"/>
<dbReference type="STRING" id="405948.SACE_0634"/>
<dbReference type="KEGG" id="sen:SACE_0634"/>
<dbReference type="eggNOG" id="COG0831">
    <property type="taxonomic scope" value="Bacteria"/>
</dbReference>
<dbReference type="HOGENOM" id="CLU_145825_1_0_11"/>
<dbReference type="OrthoDB" id="9797217at2"/>
<dbReference type="UniPathway" id="UPA00258">
    <property type="reaction ID" value="UER00370"/>
</dbReference>
<dbReference type="Proteomes" id="UP000006728">
    <property type="component" value="Chromosome"/>
</dbReference>
<dbReference type="GO" id="GO:0005737">
    <property type="term" value="C:cytoplasm"/>
    <property type="evidence" value="ECO:0007669"/>
    <property type="project" value="UniProtKB-SubCell"/>
</dbReference>
<dbReference type="GO" id="GO:0016151">
    <property type="term" value="F:nickel cation binding"/>
    <property type="evidence" value="ECO:0007669"/>
    <property type="project" value="InterPro"/>
</dbReference>
<dbReference type="GO" id="GO:0009039">
    <property type="term" value="F:urease activity"/>
    <property type="evidence" value="ECO:0007669"/>
    <property type="project" value="UniProtKB-UniRule"/>
</dbReference>
<dbReference type="GO" id="GO:0043419">
    <property type="term" value="P:urea catabolic process"/>
    <property type="evidence" value="ECO:0007669"/>
    <property type="project" value="UniProtKB-UniRule"/>
</dbReference>
<dbReference type="CDD" id="cd00390">
    <property type="entry name" value="Urease_gamma"/>
    <property type="match status" value="1"/>
</dbReference>
<dbReference type="Gene3D" id="3.30.280.10">
    <property type="entry name" value="Urease, gamma-like subunit"/>
    <property type="match status" value="1"/>
</dbReference>
<dbReference type="HAMAP" id="MF_00739">
    <property type="entry name" value="Urease_gamma"/>
    <property type="match status" value="1"/>
</dbReference>
<dbReference type="InterPro" id="IPR012010">
    <property type="entry name" value="Urease_gamma"/>
</dbReference>
<dbReference type="InterPro" id="IPR002026">
    <property type="entry name" value="Urease_gamma/gamma-beta_su"/>
</dbReference>
<dbReference type="InterPro" id="IPR036463">
    <property type="entry name" value="Urease_gamma_sf"/>
</dbReference>
<dbReference type="InterPro" id="IPR050069">
    <property type="entry name" value="Urease_subunit"/>
</dbReference>
<dbReference type="NCBIfam" id="NF009712">
    <property type="entry name" value="PRK13241.1"/>
    <property type="match status" value="1"/>
</dbReference>
<dbReference type="NCBIfam" id="TIGR00193">
    <property type="entry name" value="urease_gam"/>
    <property type="match status" value="1"/>
</dbReference>
<dbReference type="PANTHER" id="PTHR33569">
    <property type="entry name" value="UREASE"/>
    <property type="match status" value="1"/>
</dbReference>
<dbReference type="PANTHER" id="PTHR33569:SF1">
    <property type="entry name" value="UREASE"/>
    <property type="match status" value="1"/>
</dbReference>
<dbReference type="Pfam" id="PF00547">
    <property type="entry name" value="Urease_gamma"/>
    <property type="match status" value="1"/>
</dbReference>
<dbReference type="PIRSF" id="PIRSF001223">
    <property type="entry name" value="Urease_gamma"/>
    <property type="match status" value="1"/>
</dbReference>
<dbReference type="SUPFAM" id="SSF54111">
    <property type="entry name" value="Urease, gamma-subunit"/>
    <property type="match status" value="1"/>
</dbReference>
<evidence type="ECO:0000255" key="1">
    <source>
        <dbReference type="HAMAP-Rule" id="MF_00739"/>
    </source>
</evidence>
<sequence length="100" mass="11050">MHLAPHERDKLLVHLAARLARERMDRGLKLNHPEAVALITDHVVEGARDGRGVSELMKSGREVLTAEQVLDGVADMVREVQVEATFPDGTKLVTVHDPIN</sequence>
<protein>
    <recommendedName>
        <fullName evidence="1">Urease subunit gamma</fullName>
        <ecNumber evidence="1">3.5.1.5</ecNumber>
    </recommendedName>
    <alternativeName>
        <fullName evidence="1">Urea amidohydrolase subunit gamma</fullName>
    </alternativeName>
</protein>
<feature type="chain" id="PRO_1000046367" description="Urease subunit gamma">
    <location>
        <begin position="1"/>
        <end position="100"/>
    </location>
</feature>
<proteinExistence type="inferred from homology"/>
<gene>
    <name evidence="1" type="primary">ureA</name>
    <name type="ordered locus">SACE_0634</name>
</gene>
<name>URE3_SACEN</name>
<accession>A4F7F5</accession>
<reference key="1">
    <citation type="journal article" date="2007" name="Nat. Biotechnol.">
        <title>Complete genome sequence of the erythromycin-producing bacterium Saccharopolyspora erythraea NRRL23338.</title>
        <authorList>
            <person name="Oliynyk M."/>
            <person name="Samborskyy M."/>
            <person name="Lester J.B."/>
            <person name="Mironenko T."/>
            <person name="Scott N."/>
            <person name="Dickens S."/>
            <person name="Haydock S.F."/>
            <person name="Leadlay P.F."/>
        </authorList>
    </citation>
    <scope>NUCLEOTIDE SEQUENCE [LARGE SCALE GENOMIC DNA]</scope>
    <source>
        <strain>ATCC 11635 / DSM 40517 / JCM 4748 / NBRC 13426 / NCIMB 8594 / NRRL 2338</strain>
    </source>
</reference>
<organism>
    <name type="scientific">Saccharopolyspora erythraea (strain ATCC 11635 / DSM 40517 / JCM 4748 / NBRC 13426 / NCIMB 8594 / NRRL 2338)</name>
    <dbReference type="NCBI Taxonomy" id="405948"/>
    <lineage>
        <taxon>Bacteria</taxon>
        <taxon>Bacillati</taxon>
        <taxon>Actinomycetota</taxon>
        <taxon>Actinomycetes</taxon>
        <taxon>Pseudonocardiales</taxon>
        <taxon>Pseudonocardiaceae</taxon>
        <taxon>Saccharopolyspora</taxon>
    </lineage>
</organism>
<keyword id="KW-0963">Cytoplasm</keyword>
<keyword id="KW-0378">Hydrolase</keyword>
<keyword id="KW-1185">Reference proteome</keyword>
<comment type="catalytic activity">
    <reaction evidence="1">
        <text>urea + 2 H2O + H(+) = hydrogencarbonate + 2 NH4(+)</text>
        <dbReference type="Rhea" id="RHEA:20557"/>
        <dbReference type="ChEBI" id="CHEBI:15377"/>
        <dbReference type="ChEBI" id="CHEBI:15378"/>
        <dbReference type="ChEBI" id="CHEBI:16199"/>
        <dbReference type="ChEBI" id="CHEBI:17544"/>
        <dbReference type="ChEBI" id="CHEBI:28938"/>
        <dbReference type="EC" id="3.5.1.5"/>
    </reaction>
</comment>
<comment type="pathway">
    <text evidence="1">Nitrogen metabolism; urea degradation; CO(2) and NH(3) from urea (urease route): step 1/1.</text>
</comment>
<comment type="subunit">
    <text evidence="1">Heterotrimer of UreA (gamma), UreB (beta) and UreC (alpha) subunits. Three heterotrimers associate to form the active enzyme.</text>
</comment>
<comment type="subcellular location">
    <subcellularLocation>
        <location evidence="1">Cytoplasm</location>
    </subcellularLocation>
</comment>
<comment type="similarity">
    <text evidence="1">Belongs to the urease gamma subunit family.</text>
</comment>